<feature type="chain" id="PRO_0000090596" description="Mitochondrial glutathione transporter SLC25A39">
    <location>
        <begin position="1"/>
        <end position="359"/>
    </location>
</feature>
<feature type="topological domain" description="Mitochondrial intermembrane" evidence="19">
    <location>
        <begin position="1"/>
        <end position="14"/>
    </location>
</feature>
<feature type="transmembrane region" description="Helical; Name=1" evidence="1">
    <location>
        <begin position="15"/>
        <end position="35"/>
    </location>
</feature>
<feature type="topological domain" description="Mitochondrial matrix" evidence="20">
    <location>
        <begin position="36"/>
        <end position="121"/>
    </location>
</feature>
<feature type="transmembrane region" description="Helical; Name=2" evidence="1">
    <location>
        <begin position="122"/>
        <end position="142"/>
    </location>
</feature>
<feature type="topological domain" description="Mitochondrial intermembrane" evidence="19">
    <location>
        <begin position="143"/>
        <end position="160"/>
    </location>
</feature>
<feature type="transmembrane region" description="Helical; Name=3" evidence="1">
    <location>
        <begin position="161"/>
        <end position="181"/>
    </location>
</feature>
<feature type="topological domain" description="Mitochondrial matrix" evidence="19">
    <location>
        <begin position="182"/>
        <end position="214"/>
    </location>
</feature>
<feature type="transmembrane region" description="Helical; Name=4" evidence="1">
    <location>
        <begin position="215"/>
        <end position="235"/>
    </location>
</feature>
<feature type="topological domain" description="Mitochondrial intermembrane" evidence="19">
    <location>
        <begin position="236"/>
        <end position="258"/>
    </location>
</feature>
<feature type="transmembrane region" description="Helical; Name=5" evidence="1">
    <location>
        <begin position="259"/>
        <end position="279"/>
    </location>
</feature>
<feature type="topological domain" description="Mitochondrial matrix" evidence="19">
    <location>
        <begin position="280"/>
        <end position="317"/>
    </location>
</feature>
<feature type="transmembrane region" description="Helical; Name=6" evidence="1">
    <location>
        <begin position="318"/>
        <end position="338"/>
    </location>
</feature>
<feature type="topological domain" description="Mitochondrial intermembrane" evidence="19">
    <location>
        <begin position="339"/>
        <end position="359"/>
    </location>
</feature>
<feature type="repeat" description="Solcar 1">
    <location>
        <begin position="9"/>
        <end position="151"/>
    </location>
</feature>
<feature type="repeat" description="Solcar 2">
    <location>
        <begin position="159"/>
        <end position="243"/>
    </location>
</feature>
<feature type="repeat" description="Solcar 3">
    <location>
        <begin position="253"/>
        <end position="347"/>
    </location>
</feature>
<feature type="binding site" evidence="8 9">
    <location>
        <position position="74"/>
    </location>
    <ligand>
        <name>[2Fe-2S] cluster</name>
        <dbReference type="ChEBI" id="CHEBI:190135"/>
    </ligand>
</feature>
<feature type="binding site" evidence="8 9">
    <location>
        <position position="78"/>
    </location>
    <ligand>
        <name>[2Fe-2S] cluster</name>
        <dbReference type="ChEBI" id="CHEBI:190135"/>
    </ligand>
</feature>
<feature type="binding site" evidence="8 9">
    <location>
        <position position="88"/>
    </location>
    <ligand>
        <name>[2Fe-2S] cluster</name>
        <dbReference type="ChEBI" id="CHEBI:190135"/>
    </ligand>
</feature>
<feature type="binding site" evidence="8 9">
    <location>
        <position position="94"/>
    </location>
    <ligand>
        <name>[2Fe-2S] cluster</name>
        <dbReference type="ChEBI" id="CHEBI:190135"/>
    </ligand>
</feature>
<feature type="splice variant" id="VSP_003264" description="In isoform 2." evidence="12 13 14 15 16 18">
    <original>LPSSLQSTG</original>
    <variation>W</variation>
    <location>
        <begin position="64"/>
        <end position="72"/>
    </location>
</feature>
<feature type="sequence variant" id="VAR_012756" description="In dbSNP:rs2011951." evidence="2 3 5 10 11">
    <original>F</original>
    <variation>L</variation>
    <location>
        <position position="247"/>
    </location>
</feature>
<feature type="mutagenesis site" description="Abolished binding to [2Fe-2S] cluster, promoting degradation by AFG3L2." evidence="8 9">
    <original>CLLYCNGVLEPLYLCPNGARC</original>
    <variation>ALLYANGVLEPLYLAPNGARA</variation>
    <variation>SLLYSNGVLEPLYLSPNGARS</variation>
    <location>
        <begin position="74"/>
        <end position="94"/>
    </location>
</feature>
<feature type="mutagenesis site" description="Abolished glutathione import into mitochondria without affecting the levels of NAD." evidence="6 7">
    <original>D</original>
    <variation>A</variation>
    <location>
        <position position="226"/>
    </location>
</feature>
<feature type="mutagenesis site" description="Abolished glutathione import into mitochondria without affecting the levels of NAD." evidence="6">
    <original>K</original>
    <variation>A</variation>
    <location>
        <position position="329"/>
    </location>
</feature>
<feature type="sequence conflict" description="In Ref. 7; AAF69618." evidence="19" ref="7">
    <original>G</original>
    <variation>R</variation>
    <location>
        <position position="266"/>
    </location>
</feature>
<name>S2539_HUMAN</name>
<evidence type="ECO:0000255" key="1"/>
<evidence type="ECO:0000269" key="2">
    <source>
    </source>
</evidence>
<evidence type="ECO:0000269" key="3">
    <source>
    </source>
</evidence>
<evidence type="ECO:0000269" key="4">
    <source>
    </source>
</evidence>
<evidence type="ECO:0000269" key="5">
    <source>
    </source>
</evidence>
<evidence type="ECO:0000269" key="6">
    <source>
    </source>
</evidence>
<evidence type="ECO:0000269" key="7">
    <source>
    </source>
</evidence>
<evidence type="ECO:0000269" key="8">
    <source>
    </source>
</evidence>
<evidence type="ECO:0000269" key="9">
    <source>
    </source>
</evidence>
<evidence type="ECO:0000269" key="10">
    <source ref="5"/>
</evidence>
<evidence type="ECO:0000269" key="11">
    <source ref="7"/>
</evidence>
<evidence type="ECO:0000303" key="12">
    <source>
    </source>
</evidence>
<evidence type="ECO:0000303" key="13">
    <source>
    </source>
</evidence>
<evidence type="ECO:0000303" key="14">
    <source>
    </source>
</evidence>
<evidence type="ECO:0000303" key="15">
    <source>
    </source>
</evidence>
<evidence type="ECO:0000303" key="16">
    <source>
    </source>
</evidence>
<evidence type="ECO:0000303" key="17">
    <source>
    </source>
</evidence>
<evidence type="ECO:0000303" key="18">
    <source ref="7"/>
</evidence>
<evidence type="ECO:0000305" key="19"/>
<evidence type="ECO:0000305" key="20">
    <source>
    </source>
</evidence>
<evidence type="ECO:0000312" key="21">
    <source>
        <dbReference type="HGNC" id="HGNC:24279"/>
    </source>
</evidence>
<organism>
    <name type="scientific">Homo sapiens</name>
    <name type="common">Human</name>
    <dbReference type="NCBI Taxonomy" id="9606"/>
    <lineage>
        <taxon>Eukaryota</taxon>
        <taxon>Metazoa</taxon>
        <taxon>Chordata</taxon>
        <taxon>Craniata</taxon>
        <taxon>Vertebrata</taxon>
        <taxon>Euteleostomi</taxon>
        <taxon>Mammalia</taxon>
        <taxon>Eutheria</taxon>
        <taxon>Euarchontoglires</taxon>
        <taxon>Primates</taxon>
        <taxon>Haplorrhini</taxon>
        <taxon>Catarrhini</taxon>
        <taxon>Hominidae</taxon>
        <taxon>Homo</taxon>
    </lineage>
</organism>
<sequence length="359" mass="39249">MADQDPAGISPLQQMVASGTGAVVTSLFMTPLDVVKVRLQSQRPSMASELMPSSRLWSLSYTKLPSSLQSTGKCLLYCNGVLEPLYLCPNGARCATWFQDPTRFTGTMDAFVKIVRHEGTRTLWSGLPATLVMTVPATAIYFTAYDQLKAFLCGRALTSDLYAPMVAGALARLGTVTVISPLELMRTKLQAQHVSYRELGACVRTAVAQGGWRSLWLGWGPTALRDVPFSALYWFNYELVKSWLNGFRPKDQTSVGMSFVAGGISGTVAAVLTLPFDVVKTQRQVALGAMEAVRVNPLHVDSTWLLLRRIRAESGTKGLFAGFLPRIIKAAPSCAIMISTYEFGKSFFQRLNQDRLLGG</sequence>
<protein>
    <recommendedName>
        <fullName evidence="19">Mitochondrial glutathione transporter SLC25A39</fullName>
    </recommendedName>
    <alternativeName>
        <fullName evidence="19">Solute carrier family 25 member 39</fullName>
    </alternativeName>
</protein>
<proteinExistence type="evidence at protein level"/>
<comment type="function">
    <text evidence="6 7 8 9">Mitochondrial transporter required for glutathione import into mitochondria (PubMed:34707288, PubMed:35513392, PubMed:37917749, PubMed:38157846). Glutathione, which plays key roles in oxidative metabolism, is produced exclusively in the cytosol and is imported in many organelles (PubMed:34707288). Mitochondrial glutathione is required for the activity and stability of proteins containing iron-sulfur clusters, as well as erythropoiesis (PubMed:34707288).</text>
</comment>
<comment type="catalytic activity">
    <reaction evidence="6 7">
        <text>glutathione(in) = glutathione(out)</text>
        <dbReference type="Rhea" id="RHEA:74819"/>
        <dbReference type="ChEBI" id="CHEBI:57925"/>
    </reaction>
</comment>
<comment type="activity regulation">
    <text evidence="8 9">The activity of SLC25A39 is regulated by levels of mitochondrial glutathione via its ability to bind [2Fe-2S] iron-sulfur cluster (PubMed:37917749, PubMed:38157846). Upon physiological levels of mitochondrial glutathione, glutathione prevents iron-sulfur-binding to SLC25A39 promoting cleavage and degradation by AFG3L2 (PubMed:37917749, PubMed:38157846). Upon depletion of mitochondrial glutathione, SLC25A39 binds iron-sulfur, preventing cleavage and degradation by AFG3L2 (PubMed:37917749, PubMed:38157846).</text>
</comment>
<comment type="subcellular location">
    <subcellularLocation>
        <location evidence="2 4 8">Mitochondrion inner membrane</location>
        <topology evidence="1">Multi-pass membrane protein</topology>
    </subcellularLocation>
</comment>
<comment type="alternative products">
    <event type="alternative splicing"/>
    <isoform>
        <id>Q9BZJ4-1</id>
        <name>1</name>
        <name evidence="13">CGI-69L</name>
        <sequence type="displayed"/>
    </isoform>
    <isoform>
        <id>Q9BZJ4-2</id>
        <name>2</name>
        <sequence type="described" ref="VSP_003264"/>
    </isoform>
</comment>
<comment type="tissue specificity">
    <text evidence="2">Expressed in many tissues (PubMed:11139402). Abundant in testis and kidney (PubMed:11139402).</text>
</comment>
<comment type="PTM">
    <text evidence="8 9">Cleaved and degraded by AFG3L2; degradation by AFG3L2 is regulated by the ability of SLC25A39 to bind iron-sulfur (PubMed:37917749, PubMed:38157846). In absence of mitochondrial glutathione, SLC25A39 binds iron-sulfur, preventing cleavage and degradation by AFG3L2 (PubMed:37917749, PubMed:38157846). The presence of mitochondrial glutathione prevents iron-sulfur-binding to SLC25A39, promoting cleavage and degradation by AFG3L2 (PubMed:37917749, PubMed:38157846).</text>
</comment>
<comment type="similarity">
    <text evidence="19">Belongs to the mitochondrial carrier (TC 2.A.29) family.</text>
</comment>
<comment type="sequence caution" evidence="19">
    <conflict type="erroneous initiation">
        <sequence resource="EMBL-CDS" id="AAF69618"/>
    </conflict>
    <text>Truncated N-terminus.</text>
</comment>
<gene>
    <name evidence="17 21" type="primary">SLC25A39</name>
    <name evidence="13" type="ORF">CGI-69</name>
    <name evidence="18" type="ORF">PRO2163</name>
</gene>
<dbReference type="EMBL" id="AF317711">
    <property type="protein sequence ID" value="AAG60687.1"/>
    <property type="molecule type" value="mRNA"/>
</dbReference>
<dbReference type="EMBL" id="AF151827">
    <property type="protein sequence ID" value="AAD34064.1"/>
    <property type="molecule type" value="mRNA"/>
</dbReference>
<dbReference type="EMBL" id="AL133584">
    <property type="protein sequence ID" value="CAB63728.1"/>
    <property type="molecule type" value="mRNA"/>
</dbReference>
<dbReference type="EMBL" id="AK026060">
    <property type="protein sequence ID" value="BAB15341.1"/>
    <property type="molecule type" value="mRNA"/>
</dbReference>
<dbReference type="EMBL" id="AK289357">
    <property type="protein sequence ID" value="BAF82046.1"/>
    <property type="molecule type" value="mRNA"/>
</dbReference>
<dbReference type="EMBL" id="CH471178">
    <property type="protein sequence ID" value="EAW51602.1"/>
    <property type="molecule type" value="Genomic_DNA"/>
</dbReference>
<dbReference type="EMBL" id="CH471178">
    <property type="protein sequence ID" value="EAW51603.1"/>
    <property type="molecule type" value="Genomic_DNA"/>
</dbReference>
<dbReference type="EMBL" id="CH471178">
    <property type="protein sequence ID" value="EAW51604.1"/>
    <property type="molecule type" value="Genomic_DNA"/>
</dbReference>
<dbReference type="EMBL" id="CH471178">
    <property type="protein sequence ID" value="EAW51605.1"/>
    <property type="molecule type" value="Genomic_DNA"/>
</dbReference>
<dbReference type="EMBL" id="CH471178">
    <property type="protein sequence ID" value="EAW51606.1"/>
    <property type="molecule type" value="Genomic_DNA"/>
</dbReference>
<dbReference type="EMBL" id="CH471178">
    <property type="protein sequence ID" value="EAW51607.1"/>
    <property type="molecule type" value="Genomic_DNA"/>
</dbReference>
<dbReference type="EMBL" id="BC001398">
    <property type="protein sequence ID" value="AAH01398.1"/>
    <property type="molecule type" value="mRNA"/>
</dbReference>
<dbReference type="EMBL" id="BC009330">
    <property type="protein sequence ID" value="AAH09330.1"/>
    <property type="molecule type" value="mRNA"/>
</dbReference>
<dbReference type="EMBL" id="BC096819">
    <property type="protein sequence ID" value="AAH96819.1"/>
    <property type="molecule type" value="mRNA"/>
</dbReference>
<dbReference type="EMBL" id="AF119864">
    <property type="protein sequence ID" value="AAF69618.1"/>
    <property type="status" value="ALT_INIT"/>
    <property type="molecule type" value="mRNA"/>
</dbReference>
<dbReference type="CCDS" id="CCDS11482.1">
    <molecule id="Q9BZJ4-2"/>
</dbReference>
<dbReference type="CCDS" id="CCDS45700.1">
    <molecule id="Q9BZJ4-1"/>
</dbReference>
<dbReference type="PIR" id="T43493">
    <property type="entry name" value="T43493"/>
</dbReference>
<dbReference type="RefSeq" id="NP_001137252.1">
    <molecule id="Q9BZJ4-1"/>
    <property type="nucleotide sequence ID" value="NM_001143780.3"/>
</dbReference>
<dbReference type="RefSeq" id="NP_057100.1">
    <molecule id="Q9BZJ4-2"/>
    <property type="nucleotide sequence ID" value="NM_016016.4"/>
</dbReference>
<dbReference type="SMR" id="Q9BZJ4"/>
<dbReference type="BioGRID" id="119645">
    <property type="interactions" value="9"/>
</dbReference>
<dbReference type="FunCoup" id="Q9BZJ4">
    <property type="interactions" value="824"/>
</dbReference>
<dbReference type="IntAct" id="Q9BZJ4">
    <property type="interactions" value="4"/>
</dbReference>
<dbReference type="MINT" id="Q9BZJ4"/>
<dbReference type="STRING" id="9606.ENSP00000366299"/>
<dbReference type="TCDB" id="2.A.29.14.8">
    <property type="family name" value="the mitochondrial carrier (mc) family"/>
</dbReference>
<dbReference type="GlyGen" id="Q9BZJ4">
    <property type="glycosylation" value="1 site"/>
</dbReference>
<dbReference type="iPTMnet" id="Q9BZJ4"/>
<dbReference type="PhosphoSitePlus" id="Q9BZJ4"/>
<dbReference type="BioMuta" id="SLC25A39"/>
<dbReference type="DMDM" id="317373277"/>
<dbReference type="jPOST" id="Q9BZJ4"/>
<dbReference type="MassIVE" id="Q9BZJ4"/>
<dbReference type="PaxDb" id="9606-ENSP00000366299"/>
<dbReference type="PeptideAtlas" id="Q9BZJ4"/>
<dbReference type="ProteomicsDB" id="79858">
    <molecule id="Q9BZJ4-1"/>
</dbReference>
<dbReference type="ProteomicsDB" id="79859">
    <molecule id="Q9BZJ4-2"/>
</dbReference>
<dbReference type="Pumba" id="Q9BZJ4"/>
<dbReference type="Antibodypedia" id="17434">
    <property type="antibodies" value="36 antibodies from 15 providers"/>
</dbReference>
<dbReference type="DNASU" id="51629"/>
<dbReference type="Ensembl" id="ENST00000225308.12">
    <molecule id="Q9BZJ4-2"/>
    <property type="protein sequence ID" value="ENSP00000225308.8"/>
    <property type="gene ID" value="ENSG00000013306.16"/>
</dbReference>
<dbReference type="Ensembl" id="ENST00000377095.10">
    <molecule id="Q9BZJ4-1"/>
    <property type="protein sequence ID" value="ENSP00000366299.4"/>
    <property type="gene ID" value="ENSG00000013306.16"/>
</dbReference>
<dbReference type="Ensembl" id="ENST00000590194.5">
    <molecule id="Q9BZJ4-2"/>
    <property type="protein sequence ID" value="ENSP00000467681.1"/>
    <property type="gene ID" value="ENSG00000013306.16"/>
</dbReference>
<dbReference type="GeneID" id="51629"/>
<dbReference type="KEGG" id="hsa:51629"/>
<dbReference type="MANE-Select" id="ENST00000377095.10">
    <property type="protein sequence ID" value="ENSP00000366299.4"/>
    <property type="RefSeq nucleotide sequence ID" value="NM_001143780.3"/>
    <property type="RefSeq protein sequence ID" value="NP_001137252.1"/>
</dbReference>
<dbReference type="UCSC" id="uc002igm.3">
    <molecule id="Q9BZJ4-1"/>
    <property type="organism name" value="human"/>
</dbReference>
<dbReference type="AGR" id="HGNC:24279"/>
<dbReference type="CTD" id="51629"/>
<dbReference type="DisGeNET" id="51629"/>
<dbReference type="GeneCards" id="SLC25A39"/>
<dbReference type="HGNC" id="HGNC:24279">
    <property type="gene designation" value="SLC25A39"/>
</dbReference>
<dbReference type="HPA" id="ENSG00000013306">
    <property type="expression patterns" value="Low tissue specificity"/>
</dbReference>
<dbReference type="MIM" id="610820">
    <property type="type" value="gene"/>
</dbReference>
<dbReference type="neXtProt" id="NX_Q9BZJ4"/>
<dbReference type="OpenTargets" id="ENSG00000013306"/>
<dbReference type="PharmGKB" id="PA162403626"/>
<dbReference type="VEuPathDB" id="HostDB:ENSG00000013306"/>
<dbReference type="eggNOG" id="KOG0761">
    <property type="taxonomic scope" value="Eukaryota"/>
</dbReference>
<dbReference type="GeneTree" id="ENSGT00940000156382"/>
<dbReference type="HOGENOM" id="CLU_015166_0_0_1"/>
<dbReference type="InParanoid" id="Q9BZJ4"/>
<dbReference type="OMA" id="DQTSVGA"/>
<dbReference type="OrthoDB" id="1747031at2759"/>
<dbReference type="PAN-GO" id="Q9BZJ4">
    <property type="GO annotations" value="2 GO annotations based on evolutionary models"/>
</dbReference>
<dbReference type="PhylomeDB" id="Q9BZJ4"/>
<dbReference type="TreeFam" id="TF314720"/>
<dbReference type="PathwayCommons" id="Q9BZJ4"/>
<dbReference type="SignaLink" id="Q9BZJ4"/>
<dbReference type="BioGRID-ORCS" id="51629">
    <property type="hits" value="18 hits in 1162 CRISPR screens"/>
</dbReference>
<dbReference type="ChiTaRS" id="SLC25A39">
    <property type="organism name" value="human"/>
</dbReference>
<dbReference type="GeneWiki" id="SLC25A39"/>
<dbReference type="GenomeRNAi" id="51629"/>
<dbReference type="Pharos" id="Q9BZJ4">
    <property type="development level" value="Tdark"/>
</dbReference>
<dbReference type="PRO" id="PR:Q9BZJ4"/>
<dbReference type="Proteomes" id="UP000005640">
    <property type="component" value="Chromosome 17"/>
</dbReference>
<dbReference type="RNAct" id="Q9BZJ4">
    <property type="molecule type" value="protein"/>
</dbReference>
<dbReference type="Bgee" id="ENSG00000013306">
    <property type="expression patterns" value="Expressed in lower esophagus mucosa and 173 other cell types or tissues"/>
</dbReference>
<dbReference type="ExpressionAtlas" id="Q9BZJ4">
    <property type="expression patterns" value="baseline and differential"/>
</dbReference>
<dbReference type="GO" id="GO:0005743">
    <property type="term" value="C:mitochondrial inner membrane"/>
    <property type="evidence" value="ECO:0000314"/>
    <property type="project" value="UniProtKB"/>
</dbReference>
<dbReference type="GO" id="GO:0005739">
    <property type="term" value="C:mitochondrion"/>
    <property type="evidence" value="ECO:0006056"/>
    <property type="project" value="FlyBase"/>
</dbReference>
<dbReference type="GO" id="GO:0051537">
    <property type="term" value="F:2 iron, 2 sulfur cluster binding"/>
    <property type="evidence" value="ECO:0000314"/>
    <property type="project" value="UniProtKB"/>
</dbReference>
<dbReference type="GO" id="GO:0034634">
    <property type="term" value="F:glutathione transmembrane transporter activity"/>
    <property type="evidence" value="ECO:0000314"/>
    <property type="project" value="UniProtKB"/>
</dbReference>
<dbReference type="GO" id="GO:0046872">
    <property type="term" value="F:metal ion binding"/>
    <property type="evidence" value="ECO:0007669"/>
    <property type="project" value="UniProtKB-KW"/>
</dbReference>
<dbReference type="GO" id="GO:0071281">
    <property type="term" value="P:cellular response to iron ion"/>
    <property type="evidence" value="ECO:0000314"/>
    <property type="project" value="UniProt"/>
</dbReference>
<dbReference type="GO" id="GO:0160007">
    <property type="term" value="P:glutathione import into mitochondrion"/>
    <property type="evidence" value="ECO:0000314"/>
    <property type="project" value="UniProtKB"/>
</dbReference>
<dbReference type="GO" id="GO:0006783">
    <property type="term" value="P:heme biosynthetic process"/>
    <property type="evidence" value="ECO:0007669"/>
    <property type="project" value="UniProtKB-KW"/>
</dbReference>
<dbReference type="GO" id="GO:0170036">
    <property type="term" value="P:import into the mitochondrion"/>
    <property type="evidence" value="ECO:0000318"/>
    <property type="project" value="GO_Central"/>
</dbReference>
<dbReference type="FunFam" id="1.50.40.10:FF:000203">
    <property type="entry name" value="Solute carrier family 25 member 39"/>
    <property type="match status" value="1"/>
</dbReference>
<dbReference type="FunFam" id="1.50.40.10:FF:000159">
    <property type="entry name" value="solute carrier family 25 member 39 isoform X1"/>
    <property type="match status" value="1"/>
</dbReference>
<dbReference type="Gene3D" id="1.50.40.10">
    <property type="entry name" value="Mitochondrial carrier domain"/>
    <property type="match status" value="2"/>
</dbReference>
<dbReference type="InterPro" id="IPR018108">
    <property type="entry name" value="Mitochondrial_sb/sol_carrier"/>
</dbReference>
<dbReference type="InterPro" id="IPR023395">
    <property type="entry name" value="Mt_carrier_dom_sf"/>
</dbReference>
<dbReference type="InterPro" id="IPR045315">
    <property type="entry name" value="Mtm1-like"/>
</dbReference>
<dbReference type="PANTHER" id="PTHR45760">
    <property type="entry name" value="FI19922P1-RELATED"/>
    <property type="match status" value="1"/>
</dbReference>
<dbReference type="PANTHER" id="PTHR45760:SF1">
    <property type="entry name" value="MITOCHONDRIAL GLUTATHIONE TRANSPORTER SLC25A39-RELATED"/>
    <property type="match status" value="1"/>
</dbReference>
<dbReference type="Pfam" id="PF00153">
    <property type="entry name" value="Mito_carr"/>
    <property type="match status" value="4"/>
</dbReference>
<dbReference type="SUPFAM" id="SSF103506">
    <property type="entry name" value="Mitochondrial carrier"/>
    <property type="match status" value="1"/>
</dbReference>
<dbReference type="PROSITE" id="PS50920">
    <property type="entry name" value="SOLCAR"/>
    <property type="match status" value="3"/>
</dbReference>
<reference key="1">
    <citation type="journal article" date="2001" name="Biochem. J.">
        <title>Overexpression of the human 2-oxoglutarate carrier lowers mitochondrial membrane potential in HEK-293 cells: contrast with the unique cold-induced mitochondrial carrier CGI-69.</title>
        <authorList>
            <person name="Yu X.X."/>
            <person name="Lewin D.A."/>
            <person name="Zhong A."/>
            <person name="Brush J."/>
            <person name="Schow P.W."/>
            <person name="Sherwood S.W."/>
            <person name="Pan G."/>
            <person name="Adams S.H."/>
        </authorList>
    </citation>
    <scope>NUCLEOTIDE SEQUENCE [MRNA] (ISOFORMS 1 AND 2)</scope>
    <scope>SUBCELLULAR LOCATION</scope>
    <scope>TISSUE SPECIFICITY</scope>
    <scope>VARIANT LEU-247</scope>
    <source>
        <tissue>Liver</tissue>
    </source>
</reference>
<reference key="2">
    <citation type="journal article" date="2000" name="Genome Res.">
        <title>Identification of novel human genes evolutionarily conserved in Caenorhabditis elegans by comparative proteomics.</title>
        <authorList>
            <person name="Lai C.-H."/>
            <person name="Chou C.-Y."/>
            <person name="Ch'ang L.-Y."/>
            <person name="Liu C.-S."/>
            <person name="Lin W.-C."/>
        </authorList>
    </citation>
    <scope>NUCLEOTIDE SEQUENCE [LARGE SCALE MRNA] (ISOFORM 2)</scope>
</reference>
<reference key="3">
    <citation type="journal article" date="2001" name="Genome Res.">
        <title>Towards a catalog of human genes and proteins: sequencing and analysis of 500 novel complete protein coding human cDNAs.</title>
        <authorList>
            <person name="Wiemann S."/>
            <person name="Weil B."/>
            <person name="Wellenreuther R."/>
            <person name="Gassenhuber J."/>
            <person name="Glassl S."/>
            <person name="Ansorge W."/>
            <person name="Boecher M."/>
            <person name="Bloecker H."/>
            <person name="Bauersachs S."/>
            <person name="Blum H."/>
            <person name="Lauber J."/>
            <person name="Duesterhoeft A."/>
            <person name="Beyer A."/>
            <person name="Koehrer K."/>
            <person name="Strack N."/>
            <person name="Mewes H.-W."/>
            <person name="Ottenwaelder B."/>
            <person name="Obermaier B."/>
            <person name="Tampe J."/>
            <person name="Heubner D."/>
            <person name="Wambutt R."/>
            <person name="Korn B."/>
            <person name="Klein M."/>
            <person name="Poustka A."/>
        </authorList>
    </citation>
    <scope>NUCLEOTIDE SEQUENCE [LARGE SCALE MRNA] (ISOFORM 2)</scope>
    <scope>VARIANT LEU-247</scope>
    <source>
        <tissue>Testis</tissue>
    </source>
</reference>
<reference key="4">
    <citation type="journal article" date="2004" name="Nat. Genet.">
        <title>Complete sequencing and characterization of 21,243 full-length human cDNAs.</title>
        <authorList>
            <person name="Ota T."/>
            <person name="Suzuki Y."/>
            <person name="Nishikawa T."/>
            <person name="Otsuki T."/>
            <person name="Sugiyama T."/>
            <person name="Irie R."/>
            <person name="Wakamatsu A."/>
            <person name="Hayashi K."/>
            <person name="Sato H."/>
            <person name="Nagai K."/>
            <person name="Kimura K."/>
            <person name="Makita H."/>
            <person name="Sekine M."/>
            <person name="Obayashi M."/>
            <person name="Nishi T."/>
            <person name="Shibahara T."/>
            <person name="Tanaka T."/>
            <person name="Ishii S."/>
            <person name="Yamamoto J."/>
            <person name="Saito K."/>
            <person name="Kawai Y."/>
            <person name="Isono Y."/>
            <person name="Nakamura Y."/>
            <person name="Nagahari K."/>
            <person name="Murakami K."/>
            <person name="Yasuda T."/>
            <person name="Iwayanagi T."/>
            <person name="Wagatsuma M."/>
            <person name="Shiratori A."/>
            <person name="Sudo H."/>
            <person name="Hosoiri T."/>
            <person name="Kaku Y."/>
            <person name="Kodaira H."/>
            <person name="Kondo H."/>
            <person name="Sugawara M."/>
            <person name="Takahashi M."/>
            <person name="Kanda K."/>
            <person name="Yokoi T."/>
            <person name="Furuya T."/>
            <person name="Kikkawa E."/>
            <person name="Omura Y."/>
            <person name="Abe K."/>
            <person name="Kamihara K."/>
            <person name="Katsuta N."/>
            <person name="Sato K."/>
            <person name="Tanikawa M."/>
            <person name="Yamazaki M."/>
            <person name="Ninomiya K."/>
            <person name="Ishibashi T."/>
            <person name="Yamashita H."/>
            <person name="Murakawa K."/>
            <person name="Fujimori K."/>
            <person name="Tanai H."/>
            <person name="Kimata M."/>
            <person name="Watanabe M."/>
            <person name="Hiraoka S."/>
            <person name="Chiba Y."/>
            <person name="Ishida S."/>
            <person name="Ono Y."/>
            <person name="Takiguchi S."/>
            <person name="Watanabe S."/>
            <person name="Yosida M."/>
            <person name="Hotuta T."/>
            <person name="Kusano J."/>
            <person name="Kanehori K."/>
            <person name="Takahashi-Fujii A."/>
            <person name="Hara H."/>
            <person name="Tanase T.-O."/>
            <person name="Nomura Y."/>
            <person name="Togiya S."/>
            <person name="Komai F."/>
            <person name="Hara R."/>
            <person name="Takeuchi K."/>
            <person name="Arita M."/>
            <person name="Imose N."/>
            <person name="Musashino K."/>
            <person name="Yuuki H."/>
            <person name="Oshima A."/>
            <person name="Sasaki N."/>
            <person name="Aotsuka S."/>
            <person name="Yoshikawa Y."/>
            <person name="Matsunawa H."/>
            <person name="Ichihara T."/>
            <person name="Shiohata N."/>
            <person name="Sano S."/>
            <person name="Moriya S."/>
            <person name="Momiyama H."/>
            <person name="Satoh N."/>
            <person name="Takami S."/>
            <person name="Terashima Y."/>
            <person name="Suzuki O."/>
            <person name="Nakagawa S."/>
            <person name="Senoh A."/>
            <person name="Mizoguchi H."/>
            <person name="Goto Y."/>
            <person name="Shimizu F."/>
            <person name="Wakebe H."/>
            <person name="Hishigaki H."/>
            <person name="Watanabe T."/>
            <person name="Sugiyama A."/>
            <person name="Takemoto M."/>
            <person name="Kawakami B."/>
            <person name="Yamazaki M."/>
            <person name="Watanabe K."/>
            <person name="Kumagai A."/>
            <person name="Itakura S."/>
            <person name="Fukuzumi Y."/>
            <person name="Fujimori Y."/>
            <person name="Komiyama M."/>
            <person name="Tashiro H."/>
            <person name="Tanigami A."/>
            <person name="Fujiwara T."/>
            <person name="Ono T."/>
            <person name="Yamada K."/>
            <person name="Fujii Y."/>
            <person name="Ozaki K."/>
            <person name="Hirao M."/>
            <person name="Ohmori Y."/>
            <person name="Kawabata A."/>
            <person name="Hikiji T."/>
            <person name="Kobatake N."/>
            <person name="Inagaki H."/>
            <person name="Ikema Y."/>
            <person name="Okamoto S."/>
            <person name="Okitani R."/>
            <person name="Kawakami T."/>
            <person name="Noguchi S."/>
            <person name="Itoh T."/>
            <person name="Shigeta K."/>
            <person name="Senba T."/>
            <person name="Matsumura K."/>
            <person name="Nakajima Y."/>
            <person name="Mizuno T."/>
            <person name="Morinaga M."/>
            <person name="Sasaki M."/>
            <person name="Togashi T."/>
            <person name="Oyama M."/>
            <person name="Hata H."/>
            <person name="Watanabe M."/>
            <person name="Komatsu T."/>
            <person name="Mizushima-Sugano J."/>
            <person name="Satoh T."/>
            <person name="Shirai Y."/>
            <person name="Takahashi Y."/>
            <person name="Nakagawa K."/>
            <person name="Okumura K."/>
            <person name="Nagase T."/>
            <person name="Nomura N."/>
            <person name="Kikuchi H."/>
            <person name="Masuho Y."/>
            <person name="Yamashita R."/>
            <person name="Nakai K."/>
            <person name="Yada T."/>
            <person name="Nakamura Y."/>
            <person name="Ohara O."/>
            <person name="Isogai T."/>
            <person name="Sugano S."/>
        </authorList>
    </citation>
    <scope>NUCLEOTIDE SEQUENCE [LARGE SCALE MRNA] (ISOFORMS 1 AND 2)</scope>
</reference>
<reference key="5">
    <citation type="submission" date="2005-09" db="EMBL/GenBank/DDBJ databases">
        <authorList>
            <person name="Mural R.J."/>
            <person name="Istrail S."/>
            <person name="Sutton G.G."/>
            <person name="Florea L."/>
            <person name="Halpern A.L."/>
            <person name="Mobarry C.M."/>
            <person name="Lippert R."/>
            <person name="Walenz B."/>
            <person name="Shatkay H."/>
            <person name="Dew I."/>
            <person name="Miller J.R."/>
            <person name="Flanigan M.J."/>
            <person name="Edwards N.J."/>
            <person name="Bolanos R."/>
            <person name="Fasulo D."/>
            <person name="Halldorsson B.V."/>
            <person name="Hannenhalli S."/>
            <person name="Turner R."/>
            <person name="Yooseph S."/>
            <person name="Lu F."/>
            <person name="Nusskern D.R."/>
            <person name="Shue B.C."/>
            <person name="Zheng X.H."/>
            <person name="Zhong F."/>
            <person name="Delcher A.L."/>
            <person name="Huson D.H."/>
            <person name="Kravitz S.A."/>
            <person name="Mouchard L."/>
            <person name="Reinert K."/>
            <person name="Remington K.A."/>
            <person name="Clark A.G."/>
            <person name="Waterman M.S."/>
            <person name="Eichler E.E."/>
            <person name="Adams M.D."/>
            <person name="Hunkapiller M.W."/>
            <person name="Myers E.W."/>
            <person name="Venter J.C."/>
        </authorList>
    </citation>
    <scope>NUCLEOTIDE SEQUENCE [LARGE SCALE GENOMIC DNA]</scope>
    <scope>VARIANT LEU-247</scope>
</reference>
<reference key="6">
    <citation type="journal article" date="2004" name="Genome Res.">
        <title>The status, quality, and expansion of the NIH full-length cDNA project: the Mammalian Gene Collection (MGC).</title>
        <authorList>
            <consortium name="The MGC Project Team"/>
        </authorList>
    </citation>
    <scope>NUCLEOTIDE SEQUENCE [LARGE SCALE MRNA] (ISOFORMS 1 AND 2)</scope>
    <scope>VARIANT LEU-247</scope>
    <source>
        <tissue>Brain</tissue>
        <tissue>Cervix</tissue>
        <tissue>Colon</tissue>
    </source>
</reference>
<reference key="7">
    <citation type="submission" date="1999-01" db="EMBL/GenBank/DDBJ databases">
        <title>Functional prediction of the coding sequences of 79 new genes deduced by analysis of cDNA clones from human fetal liver.</title>
        <authorList>
            <person name="Zhang C."/>
            <person name="Yu Y."/>
            <person name="Zhang S."/>
            <person name="Wei H."/>
            <person name="Zhang Y."/>
            <person name="Zhou G."/>
            <person name="Bi J."/>
            <person name="Liu M."/>
            <person name="He F."/>
        </authorList>
    </citation>
    <scope>NUCLEOTIDE SEQUENCE [LARGE SCALE MRNA] OF 14-359 (ISOFORM 2)</scope>
    <scope>VARIANT LEU-247</scope>
    <source>
        <tissue>Fetal liver</tissue>
    </source>
</reference>
<reference key="8">
    <citation type="journal article" date="2000" name="EMBO Rep.">
        <title>Systematic subcellular localization of novel proteins identified by large-scale cDNA sequencing.</title>
        <authorList>
            <person name="Simpson J.C."/>
            <person name="Wellenreuther R."/>
            <person name="Poustka A."/>
            <person name="Pepperkok R."/>
            <person name="Wiemann S."/>
        </authorList>
    </citation>
    <scope>SUBCELLULAR LOCATION</scope>
</reference>
<reference key="9">
    <citation type="journal article" date="2021" name="Nature">
        <title>SLC25A39 is necessary for mitochondrial glutathione import in mammalian cells.</title>
        <authorList>
            <person name="Wang Y."/>
            <person name="Yen F.S."/>
            <person name="Zhu X.G."/>
            <person name="Timson R.C."/>
            <person name="Weber R."/>
            <person name="Xing C."/>
            <person name="Liu Y."/>
            <person name="Allwein B."/>
            <person name="Luo H."/>
            <person name="Yeh H.W."/>
            <person name="Heissel S."/>
            <person name="Unlu G."/>
            <person name="Gamazon E.R."/>
            <person name="Kharas M.G."/>
            <person name="Hite R."/>
            <person name="Birsoy K."/>
        </authorList>
    </citation>
    <scope>FUNCTION</scope>
    <scope>TRANSPORTER ACTIVITY</scope>
    <scope>MUTAGENESIS OF ASP-226 AND LYS-329</scope>
</reference>
<reference key="10">
    <citation type="journal article" date="2022" name="Nat. Commun.">
        <title>Combinatorial GxGxE CRISPR screen identifies SLC25A39 in mitochondrial glutathione transport linking iron homeostasis to OXPHOS.</title>
        <authorList>
            <person name="Shi X."/>
            <person name="Reinstadler B."/>
            <person name="Shah H."/>
            <person name="To T.L."/>
            <person name="Byrne K."/>
            <person name="Summer L."/>
            <person name="Calvo S.E."/>
            <person name="Goldberger O."/>
            <person name="Doench J.G."/>
            <person name="Mootha V.K."/>
            <person name="Shen H."/>
        </authorList>
    </citation>
    <scope>FUNCTION</scope>
    <scope>TRANSPORTER ACTIVITY</scope>
    <scope>MUTAGENESIS OF ASP-226</scope>
</reference>
<reference key="11">
    <citation type="journal article" date="2023" name="Mol. Cell">
        <title>Dual regulation of SLC25A39 by AFG3L2 and iron controls mitochondrial glutathione homeostasis.</title>
        <authorList>
            <person name="Shi X."/>
            <person name="DeCiucis M."/>
            <person name="Grabinska K.A."/>
            <person name="Kanyo J."/>
            <person name="Liu A."/>
            <person name="Lam T.T."/>
            <person name="Shen H."/>
        </authorList>
    </citation>
    <scope>FUNCTION</scope>
    <scope>ACTIVITY REGULATION</scope>
    <scope>PROTEOLYTIC CLEAVAGE</scope>
    <scope>IRON-SULFUR-BINDING</scope>
    <scope>MUTAGENESIS OF 74-CYS--CYS-94</scope>
</reference>
<reference key="12">
    <citation type="journal article" date="2023" name="Science">
        <title>Autoregulatory control of mitochondrial glutathione homeostasis.</title>
        <authorList>
            <person name="Liu Y."/>
            <person name="Liu S."/>
            <person name="Tomar A."/>
            <person name="Yen F.S."/>
            <person name="Unlu G."/>
            <person name="Ropek N."/>
            <person name="Weber R.A."/>
            <person name="Wang Y."/>
            <person name="Khan A."/>
            <person name="Gad M."/>
            <person name="Peng J."/>
            <person name="Terzi E."/>
            <person name="Alwaseem H."/>
            <person name="Pagano A.E."/>
            <person name="Heissel S."/>
            <person name="Molina H."/>
            <person name="Allwein B."/>
            <person name="Kenny T.C."/>
            <person name="Possemato R.L."/>
            <person name="Zhao L."/>
            <person name="Hite R.K."/>
            <person name="Vinogradova E.V."/>
            <person name="Mansy S.S."/>
            <person name="Birsoy K."/>
        </authorList>
    </citation>
    <scope>FUNCTION</scope>
    <scope>ACTIVITY REGULATION</scope>
    <scope>SUBCELLULAR LOCATION</scope>
    <scope>TOPOLOGY</scope>
    <scope>PROTEOLYTIC CLEAVAGE</scope>
    <scope>IRON-SULFUR-BINDING</scope>
    <scope>MUTAGENESIS OF 74-CYS--CYS-94</scope>
</reference>
<keyword id="KW-0001">2Fe-2S</keyword>
<keyword id="KW-0025">Alternative splicing</keyword>
<keyword id="KW-0350">Heme biosynthesis</keyword>
<keyword id="KW-0408">Iron</keyword>
<keyword id="KW-0411">Iron-sulfur</keyword>
<keyword id="KW-0472">Membrane</keyword>
<keyword id="KW-0479">Metal-binding</keyword>
<keyword id="KW-0496">Mitochondrion</keyword>
<keyword id="KW-0999">Mitochondrion inner membrane</keyword>
<keyword id="KW-1267">Proteomics identification</keyword>
<keyword id="KW-1185">Reference proteome</keyword>
<keyword id="KW-0677">Repeat</keyword>
<keyword id="KW-0812">Transmembrane</keyword>
<keyword id="KW-1133">Transmembrane helix</keyword>
<keyword id="KW-0813">Transport</keyword>
<accession>Q9BZJ4</accession>
<accession>A8JZZ2</accession>
<accession>D3DX51</accession>
<accession>D3DX54</accession>
<accession>Q4V9M1</accession>
<accession>Q9P182</accession>
<accession>Q9UF66</accession>
<accession>Q9Y379</accession>